<protein>
    <recommendedName>
        <fullName>E3 ubiquitin-protein ligase PPP1R11</fullName>
        <ecNumber>2.3.2.27</ecNumber>
    </recommendedName>
    <alternativeName>
        <fullName>Protein phosphatase 1 regulatory subunit 11</fullName>
    </alternativeName>
</protein>
<keyword id="KW-0650">Protein phosphatase inhibitor</keyword>
<keyword id="KW-1185">Reference proteome</keyword>
<keyword id="KW-0808">Transferase</keyword>
<keyword id="KW-0833">Ubl conjugation pathway</keyword>
<gene>
    <name type="primary">ppp1r11</name>
    <name type="ORF">TEgg002a15.1</name>
</gene>
<accession>Q6GLB0</accession>
<dbReference type="EC" id="2.3.2.27"/>
<dbReference type="EMBL" id="CR760958">
    <property type="protein sequence ID" value="CAJ82067.1"/>
    <property type="molecule type" value="mRNA"/>
</dbReference>
<dbReference type="EMBL" id="BC074590">
    <property type="protein sequence ID" value="AAH74590.1"/>
    <property type="molecule type" value="mRNA"/>
</dbReference>
<dbReference type="RefSeq" id="NP_001004815.1">
    <property type="nucleotide sequence ID" value="NM_001004815.1"/>
</dbReference>
<dbReference type="SMR" id="Q6GLB0"/>
<dbReference type="FunCoup" id="Q6GLB0">
    <property type="interactions" value="1791"/>
</dbReference>
<dbReference type="STRING" id="8364.ENSXETP00000045803"/>
<dbReference type="PaxDb" id="8364-ENSXETP00000007163"/>
<dbReference type="DNASU" id="448065"/>
<dbReference type="GeneID" id="448065"/>
<dbReference type="KEGG" id="xtr:448065"/>
<dbReference type="AGR" id="Xenbase:XB-GENE-999517"/>
<dbReference type="CTD" id="6992"/>
<dbReference type="Xenbase" id="XB-GENE-999517">
    <property type="gene designation" value="ppp1r11"/>
</dbReference>
<dbReference type="eggNOG" id="KOG4102">
    <property type="taxonomic scope" value="Eukaryota"/>
</dbReference>
<dbReference type="InParanoid" id="Q6GLB0"/>
<dbReference type="OMA" id="MSHMHSS"/>
<dbReference type="OrthoDB" id="307488at2759"/>
<dbReference type="UniPathway" id="UPA00143"/>
<dbReference type="Proteomes" id="UP000008143">
    <property type="component" value="Chromosome 8"/>
</dbReference>
<dbReference type="Bgee" id="ENSXETG00000035391">
    <property type="expression patterns" value="Expressed in brain and 16 other cell types or tissues"/>
</dbReference>
<dbReference type="GO" id="GO:0004865">
    <property type="term" value="F:protein serine/threonine phosphatase inhibitor activity"/>
    <property type="evidence" value="ECO:0007669"/>
    <property type="project" value="InterPro"/>
</dbReference>
<dbReference type="GO" id="GO:0061630">
    <property type="term" value="F:ubiquitin protein ligase activity"/>
    <property type="evidence" value="ECO:0000250"/>
    <property type="project" value="UniProtKB"/>
</dbReference>
<dbReference type="GO" id="GO:0050830">
    <property type="term" value="P:defense response to Gram-positive bacterium"/>
    <property type="evidence" value="ECO:0000250"/>
    <property type="project" value="UniProtKB"/>
</dbReference>
<dbReference type="GO" id="GO:0001818">
    <property type="term" value="P:negative regulation of cytokine production"/>
    <property type="evidence" value="ECO:0000250"/>
    <property type="project" value="UniProtKB"/>
</dbReference>
<dbReference type="GO" id="GO:0016567">
    <property type="term" value="P:protein ubiquitination"/>
    <property type="evidence" value="ECO:0007669"/>
    <property type="project" value="UniProtKB-UniPathway"/>
</dbReference>
<dbReference type="GO" id="GO:0006511">
    <property type="term" value="P:ubiquitin-dependent protein catabolic process"/>
    <property type="evidence" value="ECO:0000250"/>
    <property type="project" value="UniProtKB"/>
</dbReference>
<dbReference type="InterPro" id="IPR011107">
    <property type="entry name" value="PPI_Ypi1"/>
</dbReference>
<dbReference type="PANTHER" id="PTHR20835:SF0">
    <property type="entry name" value="E3 UBIQUITIN-PROTEIN LIGASE PPP1R11"/>
    <property type="match status" value="1"/>
</dbReference>
<dbReference type="PANTHER" id="PTHR20835">
    <property type="entry name" value="E3 UBIQUITIN-PROTEIN LIGASE PPP1R11-RELATED"/>
    <property type="match status" value="1"/>
</dbReference>
<dbReference type="Pfam" id="PF07491">
    <property type="entry name" value="PPI_Ypi1"/>
    <property type="match status" value="1"/>
</dbReference>
<comment type="function">
    <text evidence="1">Atypical E3 ubiquitin-protein ligase which ubiquitinates TLR2 at 'Lys-754' leading to its degradation by the proteasome. Inhibitor of protein phosphatase 1.</text>
</comment>
<comment type="catalytic activity">
    <reaction evidence="1">
        <text>S-ubiquitinyl-[E2 ubiquitin-conjugating enzyme]-L-cysteine + [acceptor protein]-L-lysine = [E2 ubiquitin-conjugating enzyme]-L-cysteine + N(6)-ubiquitinyl-[acceptor protein]-L-lysine.</text>
        <dbReference type="EC" id="2.3.2.27"/>
    </reaction>
</comment>
<comment type="pathway">
    <text>Protein modification; protein ubiquitination.</text>
</comment>
<evidence type="ECO:0000250" key="1">
    <source>
        <dbReference type="UniProtKB" id="O60927"/>
    </source>
</evidence>
<evidence type="ECO:0000256" key="2">
    <source>
        <dbReference type="SAM" id="MobiDB-lite"/>
    </source>
</evidence>
<proteinExistence type="inferred from homology"/>
<organism>
    <name type="scientific">Xenopus tropicalis</name>
    <name type="common">Western clawed frog</name>
    <name type="synonym">Silurana tropicalis</name>
    <dbReference type="NCBI Taxonomy" id="8364"/>
    <lineage>
        <taxon>Eukaryota</taxon>
        <taxon>Metazoa</taxon>
        <taxon>Chordata</taxon>
        <taxon>Craniata</taxon>
        <taxon>Vertebrata</taxon>
        <taxon>Euteleostomi</taxon>
        <taxon>Amphibia</taxon>
        <taxon>Batrachia</taxon>
        <taxon>Anura</taxon>
        <taxon>Pipoidea</taxon>
        <taxon>Pipidae</taxon>
        <taxon>Xenopodinae</taxon>
        <taxon>Xenopus</taxon>
        <taxon>Silurana</taxon>
    </lineage>
</organism>
<feature type="chain" id="PRO_0000239626" description="E3 ubiquitin-protein ligase PPP1R11">
    <location>
        <begin position="1"/>
        <end position="119"/>
    </location>
</feature>
<feature type="region of interest" description="Disordered" evidence="2">
    <location>
        <begin position="1"/>
        <end position="42"/>
    </location>
</feature>
<feature type="region of interest" description="Atypical RING finger domain 1" evidence="1">
    <location>
        <begin position="55"/>
        <end position="65"/>
    </location>
</feature>
<feature type="region of interest" description="Atypical RING finger domain 2" evidence="1">
    <location>
        <begin position="87"/>
        <end position="96"/>
    </location>
</feature>
<feature type="region of interest" description="Disordered" evidence="2">
    <location>
        <begin position="96"/>
        <end position="119"/>
    </location>
</feature>
<feature type="compositionally biased region" description="Basic and acidic residues" evidence="2">
    <location>
        <begin position="107"/>
        <end position="119"/>
    </location>
</feature>
<name>PP1RB_XENTR</name>
<reference key="1">
    <citation type="submission" date="2006-03" db="EMBL/GenBank/DDBJ databases">
        <authorList>
            <consortium name="Sanger Xenopus tropicalis EST/cDNA project"/>
        </authorList>
    </citation>
    <scope>NUCLEOTIDE SEQUENCE [LARGE SCALE MRNA]</scope>
    <source>
        <tissue>Egg</tissue>
    </source>
</reference>
<reference key="2">
    <citation type="submission" date="2004-06" db="EMBL/GenBank/DDBJ databases">
        <authorList>
            <consortium name="NIH - Xenopus Gene Collection (XGC) project"/>
        </authorList>
    </citation>
    <scope>NUCLEOTIDE SEQUENCE [LARGE SCALE MRNA]</scope>
    <source>
        <tissue>Embryo</tissue>
    </source>
</reference>
<sequence>MAESSGPTAGGGATSSTVTTESDTQPEHRSLTLKLRKRKPDKKVEWTCDTVDNENLGRRSSKCCCIYEKPRPFGESSSESEDEDDCCESAHCIRGHKKATSGSKETPSSHHDKTGSMQH</sequence>